<name>MT2E_RABIT</name>
<dbReference type="PIR" id="S54333">
    <property type="entry name" value="S54333"/>
</dbReference>
<dbReference type="SMR" id="P80292"/>
<dbReference type="iPTMnet" id="P80292"/>
<dbReference type="InParanoid" id="P80292"/>
<dbReference type="Proteomes" id="UP000001811">
    <property type="component" value="Unplaced"/>
</dbReference>
<dbReference type="GO" id="GO:0005737">
    <property type="term" value="C:cytoplasm"/>
    <property type="evidence" value="ECO:0000250"/>
    <property type="project" value="UniProtKB"/>
</dbReference>
<dbReference type="GO" id="GO:0005634">
    <property type="term" value="C:nucleus"/>
    <property type="evidence" value="ECO:0000250"/>
    <property type="project" value="UniProtKB"/>
</dbReference>
<dbReference type="GO" id="GO:0008270">
    <property type="term" value="F:zinc ion binding"/>
    <property type="evidence" value="ECO:0000250"/>
    <property type="project" value="UniProtKB"/>
</dbReference>
<dbReference type="GO" id="GO:0071276">
    <property type="term" value="P:cellular response to cadmium ion"/>
    <property type="evidence" value="ECO:0007669"/>
    <property type="project" value="TreeGrafter"/>
</dbReference>
<dbReference type="GO" id="GO:0071280">
    <property type="term" value="P:cellular response to copper ion"/>
    <property type="evidence" value="ECO:0007669"/>
    <property type="project" value="TreeGrafter"/>
</dbReference>
<dbReference type="GO" id="GO:0071294">
    <property type="term" value="P:cellular response to zinc ion"/>
    <property type="evidence" value="ECO:0000250"/>
    <property type="project" value="UniProtKB"/>
</dbReference>
<dbReference type="GO" id="GO:0010273">
    <property type="term" value="P:detoxification of copper ion"/>
    <property type="evidence" value="ECO:0007669"/>
    <property type="project" value="TreeGrafter"/>
</dbReference>
<dbReference type="GO" id="GO:0006882">
    <property type="term" value="P:intracellular zinc ion homeostasis"/>
    <property type="evidence" value="ECO:0007669"/>
    <property type="project" value="TreeGrafter"/>
</dbReference>
<dbReference type="GO" id="GO:0045926">
    <property type="term" value="P:negative regulation of growth"/>
    <property type="evidence" value="ECO:0000250"/>
    <property type="project" value="UniProtKB"/>
</dbReference>
<dbReference type="FunFam" id="4.10.10.10:FF:000001">
    <property type="entry name" value="Metallothionein"/>
    <property type="match status" value="1"/>
</dbReference>
<dbReference type="Gene3D" id="4.10.10.10">
    <property type="entry name" value="Metallothionein Isoform II"/>
    <property type="match status" value="1"/>
</dbReference>
<dbReference type="InterPro" id="IPR017854">
    <property type="entry name" value="Metalthion_dom_sf"/>
</dbReference>
<dbReference type="InterPro" id="IPR023587">
    <property type="entry name" value="Metalthion_dom_sf_vert"/>
</dbReference>
<dbReference type="InterPro" id="IPR000006">
    <property type="entry name" value="Metalthion_vert"/>
</dbReference>
<dbReference type="InterPro" id="IPR018064">
    <property type="entry name" value="Metalthion_vert_metal_BS"/>
</dbReference>
<dbReference type="PANTHER" id="PTHR23299">
    <property type="entry name" value="METALLOTHIONEIN"/>
    <property type="match status" value="1"/>
</dbReference>
<dbReference type="PANTHER" id="PTHR23299:SF38">
    <property type="entry name" value="METALLOTHIONEIN-2B"/>
    <property type="match status" value="1"/>
</dbReference>
<dbReference type="Pfam" id="PF00131">
    <property type="entry name" value="Metallothio"/>
    <property type="match status" value="1"/>
</dbReference>
<dbReference type="PRINTS" id="PR00860">
    <property type="entry name" value="MTVERTEBRATE"/>
</dbReference>
<dbReference type="SUPFAM" id="SSF57868">
    <property type="entry name" value="Metallothionein"/>
    <property type="match status" value="1"/>
</dbReference>
<dbReference type="PROSITE" id="PS00203">
    <property type="entry name" value="METALLOTHIONEIN_VRT"/>
    <property type="match status" value="1"/>
</dbReference>
<feature type="chain" id="PRO_0000197220" description="Metallothionein-2E">
    <location>
        <begin position="1"/>
        <end position="61"/>
    </location>
</feature>
<feature type="region of interest" description="Beta">
    <location>
        <begin position="1"/>
        <end position="29"/>
    </location>
</feature>
<feature type="region of interest" description="Alpha">
    <location>
        <begin position="30"/>
        <end position="61"/>
    </location>
</feature>
<feature type="binding site" evidence="1">
    <location>
        <position position="5"/>
    </location>
    <ligand>
        <name>a divalent metal cation</name>
        <dbReference type="ChEBI" id="CHEBI:60240"/>
        <label>1</label>
        <note>in cluster B</note>
    </ligand>
</feature>
<feature type="binding site" evidence="1">
    <location>
        <position position="7"/>
    </location>
    <ligand>
        <name>a divalent metal cation</name>
        <dbReference type="ChEBI" id="CHEBI:60240"/>
        <label>1</label>
        <note>in cluster B</note>
    </ligand>
</feature>
<feature type="binding site" evidence="1">
    <location>
        <position position="7"/>
    </location>
    <ligand>
        <name>a divalent metal cation</name>
        <dbReference type="ChEBI" id="CHEBI:60240"/>
        <label>2</label>
        <note>in cluster B</note>
    </ligand>
</feature>
<feature type="binding site" evidence="1">
    <location>
        <position position="13"/>
    </location>
    <ligand>
        <name>a divalent metal cation</name>
        <dbReference type="ChEBI" id="CHEBI:60240"/>
        <label>2</label>
        <note>in cluster B</note>
    </ligand>
</feature>
<feature type="binding site" evidence="1">
    <location>
        <position position="15"/>
    </location>
    <ligand>
        <name>a divalent metal cation</name>
        <dbReference type="ChEBI" id="CHEBI:60240"/>
        <label>2</label>
        <note>in cluster B</note>
    </ligand>
</feature>
<feature type="binding site" evidence="1">
    <location>
        <position position="15"/>
    </location>
    <ligand>
        <name>a divalent metal cation</name>
        <dbReference type="ChEBI" id="CHEBI:60240"/>
        <label>3</label>
        <note>in cluster B</note>
    </ligand>
</feature>
<feature type="binding site" evidence="1">
    <location>
        <position position="19"/>
    </location>
    <ligand>
        <name>a divalent metal cation</name>
        <dbReference type="ChEBI" id="CHEBI:60240"/>
        <label>3</label>
        <note>in cluster B</note>
    </ligand>
</feature>
<feature type="binding site" evidence="1">
    <location>
        <position position="21"/>
    </location>
    <ligand>
        <name>a divalent metal cation</name>
        <dbReference type="ChEBI" id="CHEBI:60240"/>
        <label>1</label>
        <note>in cluster B</note>
    </ligand>
</feature>
<feature type="binding site" evidence="1">
    <location>
        <position position="24"/>
    </location>
    <ligand>
        <name>a divalent metal cation</name>
        <dbReference type="ChEBI" id="CHEBI:60240"/>
        <label>1</label>
        <note>in cluster B</note>
    </ligand>
</feature>
<feature type="binding site" evidence="1">
    <location>
        <position position="24"/>
    </location>
    <ligand>
        <name>a divalent metal cation</name>
        <dbReference type="ChEBI" id="CHEBI:60240"/>
        <label>3</label>
        <note>in cluster B</note>
    </ligand>
</feature>
<feature type="binding site" evidence="1">
    <location>
        <position position="26"/>
    </location>
    <ligand>
        <name>a divalent metal cation</name>
        <dbReference type="ChEBI" id="CHEBI:60240"/>
        <label>2</label>
        <note>in cluster B</note>
    </ligand>
</feature>
<feature type="binding site" evidence="1">
    <location>
        <position position="29"/>
    </location>
    <ligand>
        <name>a divalent metal cation</name>
        <dbReference type="ChEBI" id="CHEBI:60240"/>
        <label>3</label>
        <note>in cluster B</note>
    </ligand>
</feature>
<feature type="binding site" evidence="1">
    <location>
        <position position="33"/>
    </location>
    <ligand>
        <name>a divalent metal cation</name>
        <dbReference type="ChEBI" id="CHEBI:60240"/>
        <label>4</label>
        <note>in cluster A</note>
    </ligand>
</feature>
<feature type="binding site" evidence="1">
    <location>
        <position position="34"/>
    </location>
    <ligand>
        <name>a divalent metal cation</name>
        <dbReference type="ChEBI" id="CHEBI:60240"/>
        <label>4</label>
        <note>in cluster A</note>
    </ligand>
</feature>
<feature type="binding site" evidence="1">
    <location>
        <position position="34"/>
    </location>
    <ligand>
        <name>a divalent metal cation</name>
        <dbReference type="ChEBI" id="CHEBI:60240"/>
        <label>5</label>
        <note>in cluster A</note>
    </ligand>
</feature>
<feature type="binding site" evidence="1">
    <location>
        <position position="36"/>
    </location>
    <ligand>
        <name>a divalent metal cation</name>
        <dbReference type="ChEBI" id="CHEBI:60240"/>
        <label>5</label>
        <note>in cluster A</note>
    </ligand>
</feature>
<feature type="binding site" evidence="1">
    <location>
        <position position="37"/>
    </location>
    <ligand>
        <name>a divalent metal cation</name>
        <dbReference type="ChEBI" id="CHEBI:60240"/>
        <label>5</label>
        <note>in cluster A</note>
    </ligand>
</feature>
<feature type="binding site" evidence="1">
    <location>
        <position position="37"/>
    </location>
    <ligand>
        <name>a divalent metal cation</name>
        <dbReference type="ChEBI" id="CHEBI:60240"/>
        <label>6</label>
        <note>in cluster A</note>
    </ligand>
</feature>
<feature type="binding site" evidence="1">
    <location>
        <position position="41"/>
    </location>
    <ligand>
        <name>a divalent metal cation</name>
        <dbReference type="ChEBI" id="CHEBI:60240"/>
        <label>6</label>
        <note>in cluster A</note>
    </ligand>
</feature>
<feature type="binding site" evidence="1">
    <location>
        <position position="44"/>
    </location>
    <ligand>
        <name>a divalent metal cation</name>
        <dbReference type="ChEBI" id="CHEBI:60240"/>
        <label>4</label>
        <note>in cluster A</note>
    </ligand>
</feature>
<feature type="binding site" evidence="1">
    <location>
        <position position="44"/>
    </location>
    <ligand>
        <name>a divalent metal cation</name>
        <dbReference type="ChEBI" id="CHEBI:60240"/>
        <label>6</label>
        <note>in cluster A</note>
    </ligand>
</feature>
<feature type="binding site" evidence="1">
    <location>
        <position position="48"/>
    </location>
    <ligand>
        <name>a divalent metal cation</name>
        <dbReference type="ChEBI" id="CHEBI:60240"/>
        <label>4</label>
        <note>in cluster A</note>
    </ligand>
</feature>
<feature type="binding site" evidence="1">
    <location>
        <position position="50"/>
    </location>
    <ligand>
        <name>a divalent metal cation</name>
        <dbReference type="ChEBI" id="CHEBI:60240"/>
        <label>5</label>
        <note>in cluster A</note>
    </ligand>
</feature>
<feature type="binding site" evidence="1">
    <location>
        <position position="50"/>
    </location>
    <ligand>
        <name>a divalent metal cation</name>
        <dbReference type="ChEBI" id="CHEBI:60240"/>
        <label>7</label>
        <note>in cluster A</note>
    </ligand>
</feature>
<feature type="binding site" evidence="1">
    <location>
        <position position="57"/>
    </location>
    <ligand>
        <name>a divalent metal cation</name>
        <dbReference type="ChEBI" id="CHEBI:60240"/>
        <label>7</label>
        <note>in cluster A</note>
    </ligand>
</feature>
<feature type="binding site" evidence="1">
    <location>
        <position position="59"/>
    </location>
    <ligand>
        <name>a divalent metal cation</name>
        <dbReference type="ChEBI" id="CHEBI:60240"/>
        <label>7</label>
        <note>in cluster A</note>
    </ligand>
</feature>
<feature type="binding site" evidence="1">
    <location>
        <position position="60"/>
    </location>
    <ligand>
        <name>a divalent metal cation</name>
        <dbReference type="ChEBI" id="CHEBI:60240"/>
        <label>6</label>
        <note>in cluster A</note>
    </ligand>
</feature>
<feature type="binding site" evidence="1">
    <location>
        <position position="60"/>
    </location>
    <ligand>
        <name>a divalent metal cation</name>
        <dbReference type="ChEBI" id="CHEBI:60240"/>
        <label>7</label>
        <note>in cluster A</note>
    </ligand>
</feature>
<feature type="modified residue" description="N-acetylmethionine" evidence="2">
    <location>
        <position position="1"/>
    </location>
</feature>
<sequence length="61" mass="6199">MDPNCSCATRDSCACASSCKCKECKCTSCKKSCCSCCPAGCTKCAQGCICKGALDKCSCCA</sequence>
<accession>P80292</accession>
<organism>
    <name type="scientific">Oryctolagus cuniculus</name>
    <name type="common">Rabbit</name>
    <dbReference type="NCBI Taxonomy" id="9986"/>
    <lineage>
        <taxon>Eukaryota</taxon>
        <taxon>Metazoa</taxon>
        <taxon>Chordata</taxon>
        <taxon>Craniata</taxon>
        <taxon>Vertebrata</taxon>
        <taxon>Euteleostomi</taxon>
        <taxon>Mammalia</taxon>
        <taxon>Eutheria</taxon>
        <taxon>Euarchontoglires</taxon>
        <taxon>Glires</taxon>
        <taxon>Lagomorpha</taxon>
        <taxon>Leporidae</taxon>
        <taxon>Oryctolagus</taxon>
    </lineage>
</organism>
<comment type="function">
    <text>Metallothioneins have a high content of cysteine residues that bind various heavy metals; these proteins are transcriptionally regulated by both heavy metals and glucocorticoids.</text>
</comment>
<comment type="subunit">
    <text>Monomer.</text>
</comment>
<comment type="domain">
    <text>Class I metallothioneins contain 2 metal-binding domains: four divalent ions are chelated within cluster A of the alpha domain and are coordinated via cysteinyl thiolate bridges to 11 cysteine ligands. Cluster B, the corresponding region within the beta domain, can ligate three divalent ions to 9 cysteines.</text>
</comment>
<comment type="similarity">
    <text evidence="3">Belongs to the metallothionein superfamily. Type 1 family.</text>
</comment>
<evidence type="ECO:0000250" key="1">
    <source>
        <dbReference type="UniProtKB" id="P02795"/>
    </source>
</evidence>
<evidence type="ECO:0000269" key="2">
    <source>
    </source>
</evidence>
<evidence type="ECO:0000305" key="3"/>
<protein>
    <recommendedName>
        <fullName>Metallothionein-2E</fullName>
        <shortName>MT-2E</shortName>
    </recommendedName>
    <alternativeName>
        <fullName>Metallothionein-IIE</fullName>
        <shortName>MT-IIE</shortName>
    </alternativeName>
</protein>
<keyword id="KW-0007">Acetylation</keyword>
<keyword id="KW-0104">Cadmium</keyword>
<keyword id="KW-0186">Copper</keyword>
<keyword id="KW-0903">Direct protein sequencing</keyword>
<keyword id="KW-0479">Metal-binding</keyword>
<keyword id="KW-0480">Metal-thiolate cluster</keyword>
<keyword id="KW-1185">Reference proteome</keyword>
<keyword id="KW-0862">Zinc</keyword>
<reference key="1">
    <citation type="journal article" date="1995" name="Biochem. J.">
        <title>Primary structures of seven metallothioneins from rabbit tissue.</title>
        <authorList>
            <person name="Hunziker P.E."/>
            <person name="Kaur P."/>
            <person name="Wan M."/>
            <person name="Kaenzig A."/>
        </authorList>
    </citation>
    <scope>PROTEIN SEQUENCE</scope>
    <scope>ACETYLATION AT MET-1</scope>
    <source>
        <strain>New Zealand white</strain>
        <tissue>Kidney</tissue>
        <tissue>Liver</tissue>
    </source>
</reference>
<proteinExistence type="evidence at protein level"/>